<evidence type="ECO:0000255" key="1"/>
<evidence type="ECO:0000269" key="2">
    <source>
    </source>
</evidence>
<evidence type="ECO:0000303" key="3">
    <source>
    </source>
</evidence>
<evidence type="ECO:0000305" key="4"/>
<evidence type="ECO:0000312" key="5">
    <source>
        <dbReference type="Araport" id="AT1G77610"/>
    </source>
</evidence>
<evidence type="ECO:0000312" key="6">
    <source>
        <dbReference type="EMBL" id="AAG51677.1"/>
    </source>
</evidence>
<evidence type="ECO:0000312" key="7">
    <source>
        <dbReference type="EMBL" id="CAG18176.1"/>
    </source>
</evidence>
<proteinExistence type="evidence at transcript level"/>
<sequence length="336" mass="37791">MEEGSMFRSLLAILQWWGFNVTVIIMNKWIFQKLDFKFPLSVSCVHFICSSIGAYIVIKVLKLKPLIVVDPEDRWRRIFPMSFVFCINIVLGNVSLRYIPVSFMQTIKSFTPATTVVLQWLVWRKYFDWRIWASLVPIVGGILLTSVTELSFNMFGFCAALFGCLATSTKTILAESLLHGYKFDSINTVYYMAPFATMILGIPALLLEGSGILSWFEAHPAPWSALIIILSSGVLAFCLNFSIFYVIHSTTAVTFNVAGNLKVAVAVMVSWLIFRNPISYMNAVGCGITLVGCTFYGYVRHMLSQQTPGTPRTPRTPRSKMELLPLVNNDKLEGKV</sequence>
<feature type="chain" id="PRO_0000406119" description="UDP-galactose transporter 1">
    <location>
        <begin position="1"/>
        <end position="336"/>
    </location>
</feature>
<feature type="transmembrane region" description="Helical" evidence="1">
    <location>
        <begin position="11"/>
        <end position="31"/>
    </location>
</feature>
<feature type="transmembrane region" description="Helical" evidence="1">
    <location>
        <begin position="38"/>
        <end position="58"/>
    </location>
</feature>
<feature type="transmembrane region" description="Helical" evidence="1">
    <location>
        <begin position="83"/>
        <end position="103"/>
    </location>
</feature>
<feature type="transmembrane region" description="Helical" evidence="1">
    <location>
        <begin position="131"/>
        <end position="151"/>
    </location>
</feature>
<feature type="transmembrane region" description="Helical" evidence="1">
    <location>
        <begin position="154"/>
        <end position="174"/>
    </location>
</feature>
<feature type="transmembrane region" description="Helical" evidence="1">
    <location>
        <begin position="193"/>
        <end position="213"/>
    </location>
</feature>
<feature type="transmembrane region" description="Helical" evidence="1">
    <location>
        <begin position="227"/>
        <end position="247"/>
    </location>
</feature>
<feature type="transmembrane region" description="Helical" evidence="1">
    <location>
        <begin position="254"/>
        <end position="274"/>
    </location>
</feature>
<feature type="transmembrane region" description="Helical" evidence="1">
    <location>
        <begin position="278"/>
        <end position="298"/>
    </location>
</feature>
<keyword id="KW-0472">Membrane</keyword>
<keyword id="KW-1185">Reference proteome</keyword>
<keyword id="KW-0762">Sugar transport</keyword>
<keyword id="KW-0812">Transmembrane</keyword>
<keyword id="KW-1133">Transmembrane helix</keyword>
<keyword id="KW-0813">Transport</keyword>
<dbReference type="EMBL" id="AJ633720">
    <property type="protein sequence ID" value="CAG18176.1"/>
    <property type="molecule type" value="mRNA"/>
</dbReference>
<dbReference type="EMBL" id="AC010704">
    <property type="protein sequence ID" value="AAG51677.1"/>
    <property type="molecule type" value="Genomic_DNA"/>
</dbReference>
<dbReference type="EMBL" id="CP002684">
    <property type="protein sequence ID" value="AEE36000.1"/>
    <property type="molecule type" value="Genomic_DNA"/>
</dbReference>
<dbReference type="EMBL" id="AF360161">
    <property type="protein sequence ID" value="AAK25871.1"/>
    <property type="molecule type" value="mRNA"/>
</dbReference>
<dbReference type="EMBL" id="AY113887">
    <property type="protein sequence ID" value="AAM44935.1"/>
    <property type="molecule type" value="mRNA"/>
</dbReference>
<dbReference type="PIR" id="F96805">
    <property type="entry name" value="F96805"/>
</dbReference>
<dbReference type="RefSeq" id="NP_565158.1">
    <property type="nucleotide sequence ID" value="NM_106409.4"/>
</dbReference>
<dbReference type="SMR" id="Q9C521"/>
<dbReference type="BioGRID" id="29315">
    <property type="interactions" value="1"/>
</dbReference>
<dbReference type="FunCoup" id="Q9C521">
    <property type="interactions" value="897"/>
</dbReference>
<dbReference type="IntAct" id="Q9C521">
    <property type="interactions" value="2"/>
</dbReference>
<dbReference type="STRING" id="3702.Q9C521"/>
<dbReference type="iPTMnet" id="Q9C521"/>
<dbReference type="PaxDb" id="3702-AT1G77610.1"/>
<dbReference type="ProteomicsDB" id="233032"/>
<dbReference type="EnsemblPlants" id="AT1G77610.1">
    <property type="protein sequence ID" value="AT1G77610.1"/>
    <property type="gene ID" value="AT1G77610"/>
</dbReference>
<dbReference type="GeneID" id="844096"/>
<dbReference type="Gramene" id="AT1G77610.1">
    <property type="protein sequence ID" value="AT1G77610.1"/>
    <property type="gene ID" value="AT1G77610"/>
</dbReference>
<dbReference type="KEGG" id="ath:AT1G77610"/>
<dbReference type="Araport" id="AT1G77610"/>
<dbReference type="TAIR" id="AT1G77610"/>
<dbReference type="eggNOG" id="KOG1441">
    <property type="taxonomic scope" value="Eukaryota"/>
</dbReference>
<dbReference type="HOGENOM" id="CLU_022332_2_2_1"/>
<dbReference type="InParanoid" id="Q9C521"/>
<dbReference type="OMA" id="ESIICQW"/>
<dbReference type="OrthoDB" id="5547497at2759"/>
<dbReference type="PhylomeDB" id="Q9C521"/>
<dbReference type="PRO" id="PR:Q9C521"/>
<dbReference type="Proteomes" id="UP000006548">
    <property type="component" value="Chromosome 1"/>
</dbReference>
<dbReference type="ExpressionAtlas" id="Q9C521">
    <property type="expression patterns" value="baseline and differential"/>
</dbReference>
<dbReference type="GO" id="GO:0005794">
    <property type="term" value="C:Golgi apparatus"/>
    <property type="evidence" value="ECO:0007005"/>
    <property type="project" value="TAIR"/>
</dbReference>
<dbReference type="GO" id="GO:0016020">
    <property type="term" value="C:membrane"/>
    <property type="evidence" value="ECO:0007669"/>
    <property type="project" value="UniProtKB-SubCell"/>
</dbReference>
<dbReference type="GO" id="GO:0005457">
    <property type="term" value="F:GDP-fucose transmembrane transporter activity"/>
    <property type="evidence" value="ECO:0000314"/>
    <property type="project" value="UniProtKB"/>
</dbReference>
<dbReference type="GO" id="GO:0005459">
    <property type="term" value="F:UDP-galactose transmembrane transporter activity"/>
    <property type="evidence" value="ECO:0000314"/>
    <property type="project" value="UniProtKB"/>
</dbReference>
<dbReference type="GO" id="GO:0005460">
    <property type="term" value="F:UDP-glucose transmembrane transporter activity"/>
    <property type="evidence" value="ECO:0000314"/>
    <property type="project" value="UniProtKB"/>
</dbReference>
<dbReference type="GO" id="GO:0015783">
    <property type="term" value="P:GDP-fucose transmembrane transport"/>
    <property type="evidence" value="ECO:0000314"/>
    <property type="project" value="UniProtKB"/>
</dbReference>
<dbReference type="GO" id="GO:0072334">
    <property type="term" value="P:UDP-galactose transmembrane transport"/>
    <property type="evidence" value="ECO:0000314"/>
    <property type="project" value="UniProtKB"/>
</dbReference>
<dbReference type="GO" id="GO:0015786">
    <property type="term" value="P:UDP-glucose transmembrane transport"/>
    <property type="evidence" value="ECO:0000314"/>
    <property type="project" value="UniProtKB"/>
</dbReference>
<dbReference type="FunFam" id="1.10.3730.20:FF:000015">
    <property type="entry name" value="UDP-galactose transporter 1-like"/>
    <property type="match status" value="1"/>
</dbReference>
<dbReference type="Gene3D" id="1.10.3730.20">
    <property type="match status" value="1"/>
</dbReference>
<dbReference type="InterPro" id="IPR004853">
    <property type="entry name" value="Sugar_P_trans_dom"/>
</dbReference>
<dbReference type="InterPro" id="IPR050186">
    <property type="entry name" value="TPT_transporter"/>
</dbReference>
<dbReference type="PANTHER" id="PTHR11132">
    <property type="entry name" value="SOLUTE CARRIER FAMILY 35"/>
    <property type="match status" value="1"/>
</dbReference>
<dbReference type="Pfam" id="PF03151">
    <property type="entry name" value="TPT"/>
    <property type="match status" value="1"/>
</dbReference>
<dbReference type="SUPFAM" id="SSF103481">
    <property type="entry name" value="Multidrug resistance efflux transporter EmrE"/>
    <property type="match status" value="2"/>
</dbReference>
<protein>
    <recommendedName>
        <fullName evidence="3">UDP-galactose transporter 1</fullName>
        <shortName evidence="3">At-UDP-GalT1</shortName>
    </recommendedName>
</protein>
<accession>Q9C521</accession>
<organism>
    <name type="scientific">Arabidopsis thaliana</name>
    <name type="common">Mouse-ear cress</name>
    <dbReference type="NCBI Taxonomy" id="3702"/>
    <lineage>
        <taxon>Eukaryota</taxon>
        <taxon>Viridiplantae</taxon>
        <taxon>Streptophyta</taxon>
        <taxon>Embryophyta</taxon>
        <taxon>Tracheophyta</taxon>
        <taxon>Spermatophyta</taxon>
        <taxon>Magnoliopsida</taxon>
        <taxon>eudicotyledons</taxon>
        <taxon>Gunneridae</taxon>
        <taxon>Pentapetalae</taxon>
        <taxon>rosids</taxon>
        <taxon>malvids</taxon>
        <taxon>Brassicales</taxon>
        <taxon>Brassicaceae</taxon>
        <taxon>Camelineae</taxon>
        <taxon>Arabidopsis</taxon>
    </lineage>
</organism>
<comment type="function">
    <text evidence="2">Nucleotide sugar transporter that specifically transports UDP-galactose.</text>
</comment>
<comment type="subcellular location">
    <subcellularLocation>
        <location evidence="4">Membrane</location>
        <topology evidence="4">Multi-pass membrane protein</topology>
    </subcellularLocation>
</comment>
<comment type="similarity">
    <text evidence="4">Belongs to the TPT transporter family. TPT (TC 2.A.7.9) subfamily.</text>
</comment>
<reference key="1">
    <citation type="journal article" date="2005" name="Glycobiology">
        <title>Molecular cloning of two Arabidopsis UDP-galactose transporters by complementation of a deficient Chinese hamster ovary cell line.</title>
        <authorList>
            <person name="Bakker H."/>
            <person name="Routier F."/>
            <person name="Oelmann S."/>
            <person name="Jordi W."/>
            <person name="Lommen A."/>
            <person name="Gerardy-Schahn R."/>
            <person name="Bosch D."/>
        </authorList>
    </citation>
    <scope>NUCLEOTIDE SEQUENCE [MRNA]</scope>
    <scope>FUNCTION</scope>
    <source>
        <strain>cv. Columbia</strain>
        <tissue>Silique</tissue>
    </source>
</reference>
<reference key="2">
    <citation type="journal article" date="2000" name="Nature">
        <title>Sequence and analysis of chromosome 1 of the plant Arabidopsis thaliana.</title>
        <authorList>
            <person name="Theologis A."/>
            <person name="Ecker J.R."/>
            <person name="Palm C.J."/>
            <person name="Federspiel N.A."/>
            <person name="Kaul S."/>
            <person name="White O."/>
            <person name="Alonso J."/>
            <person name="Altafi H."/>
            <person name="Araujo R."/>
            <person name="Bowman C.L."/>
            <person name="Brooks S.Y."/>
            <person name="Buehler E."/>
            <person name="Chan A."/>
            <person name="Chao Q."/>
            <person name="Chen H."/>
            <person name="Cheuk R.F."/>
            <person name="Chin C.W."/>
            <person name="Chung M.K."/>
            <person name="Conn L."/>
            <person name="Conway A.B."/>
            <person name="Conway A.R."/>
            <person name="Creasy T.H."/>
            <person name="Dewar K."/>
            <person name="Dunn P."/>
            <person name="Etgu P."/>
            <person name="Feldblyum T.V."/>
            <person name="Feng J.-D."/>
            <person name="Fong B."/>
            <person name="Fujii C.Y."/>
            <person name="Gill J.E."/>
            <person name="Goldsmith A.D."/>
            <person name="Haas B."/>
            <person name="Hansen N.F."/>
            <person name="Hughes B."/>
            <person name="Huizar L."/>
            <person name="Hunter J.L."/>
            <person name="Jenkins J."/>
            <person name="Johnson-Hopson C."/>
            <person name="Khan S."/>
            <person name="Khaykin E."/>
            <person name="Kim C.J."/>
            <person name="Koo H.L."/>
            <person name="Kremenetskaia I."/>
            <person name="Kurtz D.B."/>
            <person name="Kwan A."/>
            <person name="Lam B."/>
            <person name="Langin-Hooper S."/>
            <person name="Lee A."/>
            <person name="Lee J.M."/>
            <person name="Lenz C.A."/>
            <person name="Li J.H."/>
            <person name="Li Y.-P."/>
            <person name="Lin X."/>
            <person name="Liu S.X."/>
            <person name="Liu Z.A."/>
            <person name="Luros J.S."/>
            <person name="Maiti R."/>
            <person name="Marziali A."/>
            <person name="Militscher J."/>
            <person name="Miranda M."/>
            <person name="Nguyen M."/>
            <person name="Nierman W.C."/>
            <person name="Osborne B.I."/>
            <person name="Pai G."/>
            <person name="Peterson J."/>
            <person name="Pham P.K."/>
            <person name="Rizzo M."/>
            <person name="Rooney T."/>
            <person name="Rowley D."/>
            <person name="Sakano H."/>
            <person name="Salzberg S.L."/>
            <person name="Schwartz J.R."/>
            <person name="Shinn P."/>
            <person name="Southwick A.M."/>
            <person name="Sun H."/>
            <person name="Tallon L.J."/>
            <person name="Tambunga G."/>
            <person name="Toriumi M.J."/>
            <person name="Town C.D."/>
            <person name="Utterback T."/>
            <person name="Van Aken S."/>
            <person name="Vaysberg M."/>
            <person name="Vysotskaia V.S."/>
            <person name="Walker M."/>
            <person name="Wu D."/>
            <person name="Yu G."/>
            <person name="Fraser C.M."/>
            <person name="Venter J.C."/>
            <person name="Davis R.W."/>
        </authorList>
    </citation>
    <scope>NUCLEOTIDE SEQUENCE [LARGE SCALE GENOMIC DNA]</scope>
    <source>
        <strain>cv. Columbia</strain>
    </source>
</reference>
<reference key="3">
    <citation type="journal article" date="2017" name="Plant J.">
        <title>Araport11: a complete reannotation of the Arabidopsis thaliana reference genome.</title>
        <authorList>
            <person name="Cheng C.Y."/>
            <person name="Krishnakumar V."/>
            <person name="Chan A.P."/>
            <person name="Thibaud-Nissen F."/>
            <person name="Schobel S."/>
            <person name="Town C.D."/>
        </authorList>
    </citation>
    <scope>GENOME REANNOTATION</scope>
    <source>
        <strain>cv. Columbia</strain>
    </source>
</reference>
<reference key="4">
    <citation type="journal article" date="2003" name="Science">
        <title>Empirical analysis of transcriptional activity in the Arabidopsis genome.</title>
        <authorList>
            <person name="Yamada K."/>
            <person name="Lim J."/>
            <person name="Dale J.M."/>
            <person name="Chen H."/>
            <person name="Shinn P."/>
            <person name="Palm C.J."/>
            <person name="Southwick A.M."/>
            <person name="Wu H.C."/>
            <person name="Kim C.J."/>
            <person name="Nguyen M."/>
            <person name="Pham P.K."/>
            <person name="Cheuk R.F."/>
            <person name="Karlin-Newmann G."/>
            <person name="Liu S.X."/>
            <person name="Lam B."/>
            <person name="Sakano H."/>
            <person name="Wu T."/>
            <person name="Yu G."/>
            <person name="Miranda M."/>
            <person name="Quach H.L."/>
            <person name="Tripp M."/>
            <person name="Chang C.H."/>
            <person name="Lee J.M."/>
            <person name="Toriumi M.J."/>
            <person name="Chan M.M."/>
            <person name="Tang C.C."/>
            <person name="Onodera C.S."/>
            <person name="Deng J.M."/>
            <person name="Akiyama K."/>
            <person name="Ansari Y."/>
            <person name="Arakawa T."/>
            <person name="Banh J."/>
            <person name="Banno F."/>
            <person name="Bowser L."/>
            <person name="Brooks S.Y."/>
            <person name="Carninci P."/>
            <person name="Chao Q."/>
            <person name="Choy N."/>
            <person name="Enju A."/>
            <person name="Goldsmith A.D."/>
            <person name="Gurjal M."/>
            <person name="Hansen N.F."/>
            <person name="Hayashizaki Y."/>
            <person name="Johnson-Hopson C."/>
            <person name="Hsuan V.W."/>
            <person name="Iida K."/>
            <person name="Karnes M."/>
            <person name="Khan S."/>
            <person name="Koesema E."/>
            <person name="Ishida J."/>
            <person name="Jiang P.X."/>
            <person name="Jones T."/>
            <person name="Kawai J."/>
            <person name="Kamiya A."/>
            <person name="Meyers C."/>
            <person name="Nakajima M."/>
            <person name="Narusaka M."/>
            <person name="Seki M."/>
            <person name="Sakurai T."/>
            <person name="Satou M."/>
            <person name="Tamse R."/>
            <person name="Vaysberg M."/>
            <person name="Wallender E.K."/>
            <person name="Wong C."/>
            <person name="Yamamura Y."/>
            <person name="Yuan S."/>
            <person name="Shinozaki K."/>
            <person name="Davis R.W."/>
            <person name="Theologis A."/>
            <person name="Ecker J.R."/>
        </authorList>
    </citation>
    <scope>NUCLEOTIDE SEQUENCE [LARGE SCALE MRNA]</scope>
    <source>
        <strain>cv. Columbia</strain>
    </source>
</reference>
<reference key="5">
    <citation type="journal article" date="2014" name="Proc. Natl. Acad. Sci. U.S.A.">
        <title>The Golgi localized bifunctional UDP-rhamnose/UDP-galactose transporter family of Arabidopsis.</title>
        <authorList>
            <person name="Rautengarten C."/>
            <person name="Ebert B."/>
            <person name="Moreno I."/>
            <person name="Temple H."/>
            <person name="Herter T."/>
            <person name="Link B."/>
            <person name="Donas-Cofre D."/>
            <person name="Moreno A."/>
            <person name="Saez-Aguayo S."/>
            <person name="Blanco F."/>
            <person name="Mortimer J.C."/>
            <person name="Schultink A."/>
            <person name="Reiter W.D."/>
            <person name="Dupree P."/>
            <person name="Pauly M."/>
            <person name="Heazlewood J.L."/>
            <person name="Scheller H.V."/>
            <person name="Orellana A."/>
        </authorList>
    </citation>
    <scope>GENE FAMILY</scope>
</reference>
<gene>
    <name evidence="7" type="primary">UDP-GALT1</name>
    <name evidence="5" type="ordered locus">At1g77610</name>
    <name evidence="6" type="ORF">T5M16.20</name>
</gene>
<name>UGAL1_ARATH</name>